<dbReference type="EMBL" id="AY653733">
    <property type="protein sequence ID" value="AAV50425.1"/>
    <property type="molecule type" value="Genomic_DNA"/>
</dbReference>
<dbReference type="KEGG" id="vg:9924750"/>
<dbReference type="Proteomes" id="UP000001134">
    <property type="component" value="Genome"/>
</dbReference>
<gene>
    <name type="ordered locus">MIMI_R150</name>
</gene>
<reference key="1">
    <citation type="journal article" date="2004" name="Science">
        <title>The 1.2-megabase genome sequence of Mimivirus.</title>
        <authorList>
            <person name="Raoult D."/>
            <person name="Audic S."/>
            <person name="Robert C."/>
            <person name="Abergel C."/>
            <person name="Renesto P."/>
            <person name="Ogata H."/>
            <person name="La Scola B."/>
            <person name="Susan M."/>
            <person name="Claverie J.-M."/>
        </authorList>
    </citation>
    <scope>NUCLEOTIDE SEQUENCE [LARGE SCALE GENOMIC DNA]</scope>
    <source>
        <strain>Rowbotham-Bradford</strain>
    </source>
</reference>
<protein>
    <recommendedName>
        <fullName>Uncharacterized protein R150</fullName>
    </recommendedName>
</protein>
<feature type="chain" id="PRO_0000071222" description="Uncharacterized protein R150">
    <location>
        <begin position="1"/>
        <end position="266"/>
    </location>
</feature>
<organismHost>
    <name type="scientific">Acanthamoeba polyphaga</name>
    <name type="common">Amoeba</name>
    <dbReference type="NCBI Taxonomy" id="5757"/>
</organismHost>
<name>YR150_MIMIV</name>
<organism>
    <name type="scientific">Acanthamoeba polyphaga mimivirus</name>
    <name type="common">APMV</name>
    <dbReference type="NCBI Taxonomy" id="212035"/>
    <lineage>
        <taxon>Viruses</taxon>
        <taxon>Varidnaviria</taxon>
        <taxon>Bamfordvirae</taxon>
        <taxon>Nucleocytoviricota</taxon>
        <taxon>Megaviricetes</taxon>
        <taxon>Imitervirales</taxon>
        <taxon>Mimiviridae</taxon>
        <taxon>Megamimivirinae</taxon>
        <taxon>Mimivirus</taxon>
        <taxon>Mimivirus bradfordmassiliense</taxon>
    </lineage>
</organism>
<keyword id="KW-1185">Reference proteome</keyword>
<sequence>MEIDNQSNSWNDSDCEMDFYLTETINVETTYTSDNDQSTYIYKPIEPVRVNTEMNRVHLVVDFLNLVGEITRSQEDLGFMNLEKRVLDHQLGSKIEVVRIMENIKVFFDSALPTGSKVLLVTKRFGDKQIWNCFKQSFRQILVNPFEPCNQEYELYVAQKSQRFDKEHDDRLTVRLALMLKSEGKRVFVVSNDKYRSMATHWDLDSSFVKVTDDAPTLGQKKIFVISADHFGLDLLRDLHAVKFGFSCNQSTQAQINFLPSTISVM</sequence>
<accession>Q5UPM0</accession>
<proteinExistence type="predicted"/>